<name>EASH_EPIFI</name>
<proteinExistence type="evidence at transcript level"/>
<keyword id="KW-0017">Alkaloid metabolism</keyword>
<keyword id="KW-0223">Dioxygenase</keyword>
<keyword id="KW-0408">Iron</keyword>
<keyword id="KW-0479">Metal-binding</keyword>
<keyword id="KW-0560">Oxidoreductase</keyword>
<dbReference type="EC" id="1.14.11.-" evidence="8"/>
<dbReference type="EMBL" id="EF125025">
    <property type="protein sequence ID" value="ABM91453.1"/>
    <property type="molecule type" value="Genomic_DNA"/>
</dbReference>
<dbReference type="SMR" id="A2TBT9"/>
<dbReference type="UniPathway" id="UPA00327"/>
<dbReference type="GO" id="GO:0051213">
    <property type="term" value="F:dioxygenase activity"/>
    <property type="evidence" value="ECO:0007669"/>
    <property type="project" value="UniProtKB-KW"/>
</dbReference>
<dbReference type="GO" id="GO:0046872">
    <property type="term" value="F:metal ion binding"/>
    <property type="evidence" value="ECO:0007669"/>
    <property type="project" value="UniProtKB-KW"/>
</dbReference>
<dbReference type="GO" id="GO:0035835">
    <property type="term" value="P:indole alkaloid biosynthetic process"/>
    <property type="evidence" value="ECO:0007669"/>
    <property type="project" value="UniProtKB-UniPathway"/>
</dbReference>
<dbReference type="Gene3D" id="2.60.120.620">
    <property type="entry name" value="q2cbj1_9rhob like domain"/>
    <property type="match status" value="1"/>
</dbReference>
<dbReference type="InterPro" id="IPR008775">
    <property type="entry name" value="Phytyl_CoA_dOase-like"/>
</dbReference>
<dbReference type="Pfam" id="PF05721">
    <property type="entry name" value="PhyH"/>
    <property type="match status" value="1"/>
</dbReference>
<dbReference type="SUPFAM" id="SSF51197">
    <property type="entry name" value="Clavaminate synthase-like"/>
    <property type="match status" value="1"/>
</dbReference>
<protein>
    <recommendedName>
        <fullName evidence="6">Dioxygenase easH</fullName>
        <ecNumber evidence="8">1.14.11.-</ecNumber>
    </recommendedName>
    <alternativeName>
        <fullName evidence="6">Ergot alkaloid biosynthesis protein H</fullName>
    </alternativeName>
</protein>
<accession>A2TBT9</accession>
<gene>
    <name evidence="6" type="primary">easH</name>
</gene>
<feature type="chain" id="PRO_0000439146" description="Dioxygenase easH">
    <location>
        <begin position="1" status="less than"/>
        <end position="185"/>
    </location>
</feature>
<feature type="binding site" evidence="1">
    <location>
        <position position="17"/>
    </location>
    <ligand>
        <name>Fe cation</name>
        <dbReference type="ChEBI" id="CHEBI:24875"/>
    </ligand>
</feature>
<feature type="binding site" evidence="1">
    <location>
        <position position="19"/>
    </location>
    <ligand>
        <name>Fe cation</name>
        <dbReference type="ChEBI" id="CHEBI:24875"/>
    </ligand>
</feature>
<feature type="binding site" evidence="1">
    <location>
        <position position="93"/>
    </location>
    <ligand>
        <name>Fe cation</name>
        <dbReference type="ChEBI" id="CHEBI:24875"/>
    </ligand>
</feature>
<feature type="non-terminal residue" evidence="9">
    <location>
        <position position="1"/>
    </location>
</feature>
<organism>
    <name type="scientific">Epichloe festucae var. lolii</name>
    <name type="common">Neotyphodium lolii</name>
    <name type="synonym">Acremonium lolii</name>
    <dbReference type="NCBI Taxonomy" id="73839"/>
    <lineage>
        <taxon>Eukaryota</taxon>
        <taxon>Fungi</taxon>
        <taxon>Dikarya</taxon>
        <taxon>Ascomycota</taxon>
        <taxon>Pezizomycotina</taxon>
        <taxon>Sordariomycetes</taxon>
        <taxon>Hypocreomycetidae</taxon>
        <taxon>Hypocreales</taxon>
        <taxon>Clavicipitaceae</taxon>
        <taxon>Epichloe</taxon>
    </lineage>
</organism>
<sequence length="185" mass="20234">YGAAIENGPGTQEQIWHRDQPDYALLKAGPGTAEAMLNFFTALTDFTPDTGMTQYIWGSHKRVELGEPDAEHPVVFTKLKAGDTAVLSGKIVHRGSANATPDVFRRALALMIIPAIMTPFDATCHLSRHMVETMTPLAQKMVGRRSVVIPPPHTVGAALGIWCLNMREVGEQMGLKSNQPDKEEE</sequence>
<evidence type="ECO:0000250" key="1">
    <source>
        <dbReference type="UniProtKB" id="G8GV69"/>
    </source>
</evidence>
<evidence type="ECO:0000250" key="2">
    <source>
        <dbReference type="UniProtKB" id="Q4WAW9"/>
    </source>
</evidence>
<evidence type="ECO:0000250" key="3">
    <source>
        <dbReference type="UniProtKB" id="Q50EL0"/>
    </source>
</evidence>
<evidence type="ECO:0000269" key="4">
    <source>
    </source>
</evidence>
<evidence type="ECO:0000269" key="5">
    <source>
    </source>
</evidence>
<evidence type="ECO:0000303" key="6">
    <source>
    </source>
</evidence>
<evidence type="ECO:0000305" key="7"/>
<evidence type="ECO:0000305" key="8">
    <source>
    </source>
</evidence>
<evidence type="ECO:0000312" key="9">
    <source>
        <dbReference type="EMBL" id="ABM91453.1"/>
    </source>
</evidence>
<reference key="1">
    <citation type="journal article" date="2007" name="Appl. Environ. Microbiol.">
        <title>A complex ergovaline gene cluster in epichloe endophytes of grasses.</title>
        <authorList>
            <person name="Fleetwood D.J."/>
            <person name="Scott B."/>
            <person name="Lane G.A."/>
            <person name="Tanaka A."/>
            <person name="Johnson R.D."/>
        </authorList>
    </citation>
    <scope>NUCLEOTIDE SEQUENCE [GENOMIC DNA]</scope>
    <scope>FUNCTION</scope>
    <scope>INDUCTION</scope>
    <source>
        <strain>Lp19</strain>
    </source>
</reference>
<reference key="2">
    <citation type="journal article" date="2001" name="Proc. Natl. Acad. Sci. U.S.A.">
        <title>Elimination of ergovaline from a grass-Neotyphodium endophyte symbiosis by genetic modification of the endophyte.</title>
        <authorList>
            <person name="Panaccione D.G."/>
            <person name="Johnson R.D."/>
            <person name="Wang J."/>
            <person name="Young C.A."/>
            <person name="Damrongkool P."/>
            <person name="Scott B."/>
            <person name="Schardl C.L."/>
        </authorList>
    </citation>
    <scope>FUNCTION</scope>
</reference>
<comment type="function">
    <text evidence="3 4 5">Dioxygenase; part of the gene cluster that mediates the biosynthesis of fungal ergot alkaloid ergovaline, the predominant ergopeptine product in E.festucae var. lolii (PubMed:17308187). DmaW catalyzes the first step of ergot alkaloid biosynthesis by condensing dimethylallyl diphosphate (DMAP) and tryptophan to form 4-dimethylallyl-L-tryptophan (By similarity). The second step is catalyzed by the methyltransferase easF that methylates 4-dimethylallyl-L-tryptophan in the presence of S-adenosyl-L-methionine, resulting in the formation of 4-dimethylallyl-L-abrine (By similarity). The catalase easC and the FAD-dependent oxidoreductase easE then transform 4-dimethylallyl-L-abrine to chanoclavine-I which is further oxidized by easD in the presence of NAD(+), resulting in the formation of chanoclavine-I aldehyde (By similarity). Agroclavine dehydrogenase easG then mediates the conversion of chanoclavine-I aldehyde to agroclavine via a non-enzymatic adduct reaction: the substrate is an iminium intermediate that is formed spontaneously from chanoclavine-I aldehyde in the presence of glutathione (By similarity). The presence of easA is not required to complete this reaction (By similarity). Further conversion of agroclavine to paspalic acid is a two-step process involving oxidation of agroclavine to elymoclavine and of elymoclavine to paspalic acid, the second step being performed by the elymoclavine oxidase cloA (By similarity). Paspalic acid is then further converted to D-lysergic acid (By similarity). Ergovaline is assembled from D-lysergic acid and three different amino acids by the D-lysergyl-peptide-synthetase composed of a monomudular (lpsB) and a trimodular (lpsA) nonribosomal peptide synthetase subunit (PubMed:11592979, PubMed:17308187).</text>
</comment>
<comment type="cofactor">
    <cofactor evidence="2">
        <name>Fe cation</name>
        <dbReference type="ChEBI" id="CHEBI:24875"/>
    </cofactor>
</comment>
<comment type="pathway">
    <text evidence="8">Alkaloid biosynthesis; ergot alkaloid biosynthesis.</text>
</comment>
<comment type="subunit">
    <text evidence="2">Homodimer.</text>
</comment>
<comment type="induction">
    <text evidence="5">Strongly expressed in planta but weakly expressed in axenic culture (PubMed:17308187).</text>
</comment>
<comment type="similarity">
    <text evidence="7">Belongs to the PhyH family.</text>
</comment>